<gene>
    <name type="primary">KRT77</name>
    <name type="synonym">KRT1B</name>
</gene>
<feature type="chain" id="PRO_0000063711" description="Keratin, type II cytoskeletal 1b">
    <location>
        <begin position="1"/>
        <end position="578"/>
    </location>
</feature>
<feature type="domain" description="IF rod" evidence="2">
    <location>
        <begin position="164"/>
        <end position="477"/>
    </location>
</feature>
<feature type="region of interest" description="Head">
    <location>
        <begin position="1"/>
        <end position="163"/>
    </location>
</feature>
<feature type="region of interest" description="Coil 1A">
    <location>
        <begin position="164"/>
        <end position="200"/>
    </location>
</feature>
<feature type="region of interest" description="Linker 1">
    <location>
        <begin position="201"/>
        <end position="219"/>
    </location>
</feature>
<feature type="region of interest" description="Coil 1B">
    <location>
        <begin position="220"/>
        <end position="311"/>
    </location>
</feature>
<feature type="region of interest" description="Linker 12">
    <location>
        <begin position="312"/>
        <end position="335"/>
    </location>
</feature>
<feature type="region of interest" description="Coil 2">
    <location>
        <begin position="336"/>
        <end position="474"/>
    </location>
</feature>
<feature type="region of interest" description="Tail">
    <location>
        <begin position="475"/>
        <end position="578"/>
    </location>
</feature>
<feature type="region of interest" description="Disordered" evidence="3">
    <location>
        <begin position="547"/>
        <end position="578"/>
    </location>
</feature>
<feature type="compositionally biased region" description="Gly residues" evidence="3">
    <location>
        <begin position="547"/>
        <end position="556"/>
    </location>
</feature>
<feature type="compositionally biased region" description="Polar residues" evidence="3">
    <location>
        <begin position="562"/>
        <end position="571"/>
    </location>
</feature>
<feature type="site" description="Stutter">
    <location>
        <position position="418"/>
    </location>
</feature>
<feature type="modified residue" description="Omega-N-methylarginine" evidence="1">
    <location>
        <position position="95"/>
    </location>
</feature>
<feature type="modified residue" description="Omega-N-methylarginine" evidence="1">
    <location>
        <position position="523"/>
    </location>
</feature>
<feature type="sequence variant" id="VAR_056022" description="In dbSNP:rs17118224.">
    <original>A</original>
    <variation>T</variation>
    <location>
        <position position="10"/>
    </location>
</feature>
<feature type="sequence conflict" description="In Ref. 1; CAD91892." evidence="5" ref="1">
    <original>D</original>
    <variation>N</variation>
    <location>
        <position position="336"/>
    </location>
</feature>
<feature type="sequence conflict" description="In Ref. 1; CAD91892." evidence="5" ref="1">
    <original>R</original>
    <variation>G</variation>
    <location>
        <position position="533"/>
    </location>
</feature>
<proteinExistence type="evidence at protein level"/>
<reference evidence="5 6" key="1">
    <citation type="journal article" date="2005" name="J. Invest. Dermatol.">
        <title>Characterization of new members of the human type II keratin gene family and a general evaluation of the keratin gene domain on chromosome 12q13.13.</title>
        <authorList>
            <person name="Rogers M.A."/>
            <person name="Edler L."/>
            <person name="Winter H."/>
            <person name="Langbein L."/>
            <person name="Beckmann I."/>
            <person name="Schweizer J."/>
        </authorList>
    </citation>
    <scope>NUCLEOTIDE SEQUENCE [MRNA]</scope>
    <scope>TISSUE SPECIFICITY</scope>
    <source>
        <tissue evidence="6">Skin</tissue>
    </source>
</reference>
<reference key="2">
    <citation type="journal article" date="2006" name="Nature">
        <title>The finished DNA sequence of human chromosome 12.</title>
        <authorList>
            <person name="Scherer S.E."/>
            <person name="Muzny D.M."/>
            <person name="Buhay C.J."/>
            <person name="Chen R."/>
            <person name="Cree A."/>
            <person name="Ding Y."/>
            <person name="Dugan-Rocha S."/>
            <person name="Gill R."/>
            <person name="Gunaratne P."/>
            <person name="Harris R.A."/>
            <person name="Hawes A.C."/>
            <person name="Hernandez J."/>
            <person name="Hodgson A.V."/>
            <person name="Hume J."/>
            <person name="Jackson A."/>
            <person name="Khan Z.M."/>
            <person name="Kovar-Smith C."/>
            <person name="Lewis L.R."/>
            <person name="Lozado R.J."/>
            <person name="Metzker M.L."/>
            <person name="Milosavljevic A."/>
            <person name="Miner G.R."/>
            <person name="Montgomery K.T."/>
            <person name="Morgan M.B."/>
            <person name="Nazareth L.V."/>
            <person name="Scott G."/>
            <person name="Sodergren E."/>
            <person name="Song X.-Z."/>
            <person name="Steffen D."/>
            <person name="Lovering R.C."/>
            <person name="Wheeler D.A."/>
            <person name="Worley K.C."/>
            <person name="Yuan Y."/>
            <person name="Zhang Z."/>
            <person name="Adams C.Q."/>
            <person name="Ansari-Lari M.A."/>
            <person name="Ayele M."/>
            <person name="Brown M.J."/>
            <person name="Chen G."/>
            <person name="Chen Z."/>
            <person name="Clerc-Blankenburg K.P."/>
            <person name="Davis C."/>
            <person name="Delgado O."/>
            <person name="Dinh H.H."/>
            <person name="Draper H."/>
            <person name="Gonzalez-Garay M.L."/>
            <person name="Havlak P."/>
            <person name="Jackson L.R."/>
            <person name="Jacob L.S."/>
            <person name="Kelly S.H."/>
            <person name="Li L."/>
            <person name="Li Z."/>
            <person name="Liu J."/>
            <person name="Liu W."/>
            <person name="Lu J."/>
            <person name="Maheshwari M."/>
            <person name="Nguyen B.-V."/>
            <person name="Okwuonu G.O."/>
            <person name="Pasternak S."/>
            <person name="Perez L.M."/>
            <person name="Plopper F.J.H."/>
            <person name="Santibanez J."/>
            <person name="Shen H."/>
            <person name="Tabor P.E."/>
            <person name="Verduzco D."/>
            <person name="Waldron L."/>
            <person name="Wang Q."/>
            <person name="Williams G.A."/>
            <person name="Zhang J."/>
            <person name="Zhou J."/>
            <person name="Allen C.C."/>
            <person name="Amin A.G."/>
            <person name="Anyalebechi V."/>
            <person name="Bailey M."/>
            <person name="Barbaria J.A."/>
            <person name="Bimage K.E."/>
            <person name="Bryant N.P."/>
            <person name="Burch P.E."/>
            <person name="Burkett C.E."/>
            <person name="Burrell K.L."/>
            <person name="Calderon E."/>
            <person name="Cardenas V."/>
            <person name="Carter K."/>
            <person name="Casias K."/>
            <person name="Cavazos I."/>
            <person name="Cavazos S.R."/>
            <person name="Ceasar H."/>
            <person name="Chacko J."/>
            <person name="Chan S.N."/>
            <person name="Chavez D."/>
            <person name="Christopoulos C."/>
            <person name="Chu J."/>
            <person name="Cockrell R."/>
            <person name="Cox C.D."/>
            <person name="Dang M."/>
            <person name="Dathorne S.R."/>
            <person name="David R."/>
            <person name="Davis C.M."/>
            <person name="Davy-Carroll L."/>
            <person name="Deshazo D.R."/>
            <person name="Donlin J.E."/>
            <person name="D'Souza L."/>
            <person name="Eaves K.A."/>
            <person name="Egan A."/>
            <person name="Emery-Cohen A.J."/>
            <person name="Escotto M."/>
            <person name="Flagg N."/>
            <person name="Forbes L.D."/>
            <person name="Gabisi A.M."/>
            <person name="Garza M."/>
            <person name="Hamilton C."/>
            <person name="Henderson N."/>
            <person name="Hernandez O."/>
            <person name="Hines S."/>
            <person name="Hogues M.E."/>
            <person name="Huang M."/>
            <person name="Idlebird D.G."/>
            <person name="Johnson R."/>
            <person name="Jolivet A."/>
            <person name="Jones S."/>
            <person name="Kagan R."/>
            <person name="King L.M."/>
            <person name="Leal B."/>
            <person name="Lebow H."/>
            <person name="Lee S."/>
            <person name="LeVan J.M."/>
            <person name="Lewis L.C."/>
            <person name="London P."/>
            <person name="Lorensuhewa L.M."/>
            <person name="Loulseged H."/>
            <person name="Lovett D.A."/>
            <person name="Lucier A."/>
            <person name="Lucier R.L."/>
            <person name="Ma J."/>
            <person name="Madu R.C."/>
            <person name="Mapua P."/>
            <person name="Martindale A.D."/>
            <person name="Martinez E."/>
            <person name="Massey E."/>
            <person name="Mawhiney S."/>
            <person name="Meador M.G."/>
            <person name="Mendez S."/>
            <person name="Mercado C."/>
            <person name="Mercado I.C."/>
            <person name="Merritt C.E."/>
            <person name="Miner Z.L."/>
            <person name="Minja E."/>
            <person name="Mitchell T."/>
            <person name="Mohabbat F."/>
            <person name="Mohabbat K."/>
            <person name="Montgomery B."/>
            <person name="Moore N."/>
            <person name="Morris S."/>
            <person name="Munidasa M."/>
            <person name="Ngo R.N."/>
            <person name="Nguyen N.B."/>
            <person name="Nickerson E."/>
            <person name="Nwaokelemeh O.O."/>
            <person name="Nwokenkwo S."/>
            <person name="Obregon M."/>
            <person name="Oguh M."/>
            <person name="Oragunye N."/>
            <person name="Oviedo R.J."/>
            <person name="Parish B.J."/>
            <person name="Parker D.N."/>
            <person name="Parrish J."/>
            <person name="Parks K.L."/>
            <person name="Paul H.A."/>
            <person name="Payton B.A."/>
            <person name="Perez A."/>
            <person name="Perrin W."/>
            <person name="Pickens A."/>
            <person name="Primus E.L."/>
            <person name="Pu L.-L."/>
            <person name="Puazo M."/>
            <person name="Quiles M.M."/>
            <person name="Quiroz J.B."/>
            <person name="Rabata D."/>
            <person name="Reeves K."/>
            <person name="Ruiz S.J."/>
            <person name="Shao H."/>
            <person name="Sisson I."/>
            <person name="Sonaike T."/>
            <person name="Sorelle R.P."/>
            <person name="Sutton A.E."/>
            <person name="Svatek A.F."/>
            <person name="Svetz L.A."/>
            <person name="Tamerisa K.S."/>
            <person name="Taylor T.R."/>
            <person name="Teague B."/>
            <person name="Thomas N."/>
            <person name="Thorn R.D."/>
            <person name="Trejos Z.Y."/>
            <person name="Trevino B.K."/>
            <person name="Ukegbu O.N."/>
            <person name="Urban J.B."/>
            <person name="Vasquez L.I."/>
            <person name="Vera V.A."/>
            <person name="Villasana D.M."/>
            <person name="Wang L."/>
            <person name="Ward-Moore S."/>
            <person name="Warren J.T."/>
            <person name="Wei X."/>
            <person name="White F."/>
            <person name="Williamson A.L."/>
            <person name="Wleczyk R."/>
            <person name="Wooden H.S."/>
            <person name="Wooden S.H."/>
            <person name="Yen J."/>
            <person name="Yoon L."/>
            <person name="Yoon V."/>
            <person name="Zorrilla S.E."/>
            <person name="Nelson D."/>
            <person name="Kucherlapati R."/>
            <person name="Weinstock G."/>
            <person name="Gibbs R.A."/>
        </authorList>
    </citation>
    <scope>NUCLEOTIDE SEQUENCE [LARGE SCALE GENOMIC DNA]</scope>
</reference>
<reference evidence="5 7" key="3">
    <citation type="journal article" date="2001" name="J. Cell Sci.">
        <title>Genes for intermediate filament proteins and the draft sequence of the human genome: novel keratin genes and a surprisingly high number of pseudogenes related to keratin genes 8 and 18.</title>
        <authorList>
            <person name="Hesse M."/>
            <person name="Magin T.M."/>
            <person name="Weber K."/>
        </authorList>
    </citation>
    <scope>IDENTIFICATION</scope>
</reference>
<accession>Q7Z794</accession>
<accession>Q7RTS8</accession>
<name>K2C1B_HUMAN</name>
<protein>
    <recommendedName>
        <fullName>Keratin, type II cytoskeletal 1b</fullName>
    </recommendedName>
    <alternativeName>
        <fullName>Cytokeratin-1B</fullName>
        <shortName>CK-1B</shortName>
    </alternativeName>
    <alternativeName>
        <fullName>Keratin-77</fullName>
        <shortName>K77</shortName>
    </alternativeName>
    <alternativeName>
        <fullName>Type-II keratin Kb39</fullName>
    </alternativeName>
</protein>
<sequence>MSHQFSSQSAFSSMSRRVYSTSSSAGSGGGSPAVGSVCYARGRCGGGGYGIHGRGFGSRSLYNLGGSRSISINLMGRSTSGFCQGGGVGGFGGGRGFGVGSTGAGGFGGGGFGGAGFGTSNFGLGGFGPYCPPGGIQEVTINQSLLEPLHLEVDPEIQRIKTQEREQIMVLNNKFASFIDKVRFLEQQNQVLQTKWELLQQVNTSTGTNNLEPLLENYIGDLRRQVDLLSAEQMRQNAEVRSMQDVVEDYKSKYEDEINKRTGSENDFVVLKKDVDAAYVSKVDLESRVDTLTGEVNFLKYLFLTELSQVQTHISDTNVILSMDNNRSLDLDSIIDAVRTQYELIAQRSKDEAEALYQTKYQELQITAGRHGDDLKNSKMEIAELNRTVQRLQAEISNVKKQIEQMQSLISDAEERGEQALQDAWQKLQDLEEALQQSKEELARLLRDYQAMLGVKLSLDVEIATYRQLLEGEESRMSGELQSHVSISVQNSQVSVNGGAGGGGSYGSGGYGGGSGGGYGGGRSYRGGGARGRSGGGYGSGCGGGGGSYGGSGRSGRGSSRVQIIQTSTNTSHRRILE</sequence>
<keyword id="KW-0164">Citrullination</keyword>
<keyword id="KW-0175">Coiled coil</keyword>
<keyword id="KW-0403">Intermediate filament</keyword>
<keyword id="KW-0416">Keratin</keyword>
<keyword id="KW-0488">Methylation</keyword>
<keyword id="KW-1267">Proteomics identification</keyword>
<keyword id="KW-1185">Reference proteome</keyword>
<dbReference type="EMBL" id="AJ564104">
    <property type="protein sequence ID" value="CAD91892.1"/>
    <property type="molecule type" value="mRNA"/>
</dbReference>
<dbReference type="EMBL" id="AC055716">
    <property type="status" value="NOT_ANNOTATED_CDS"/>
    <property type="molecule type" value="Genomic_DNA"/>
</dbReference>
<dbReference type="EMBL" id="BK000975">
    <property type="protein sequence ID" value="DAA00402.1"/>
    <property type="status" value="ALT_SEQ"/>
    <property type="molecule type" value="Genomic_DNA"/>
</dbReference>
<dbReference type="CCDS" id="CCDS8837.1"/>
<dbReference type="RefSeq" id="NP_778253.2">
    <property type="nucleotide sequence ID" value="NM_175078.3"/>
</dbReference>
<dbReference type="SMR" id="Q7Z794"/>
<dbReference type="BioGRID" id="131903">
    <property type="interactions" value="80"/>
</dbReference>
<dbReference type="FunCoup" id="Q7Z794">
    <property type="interactions" value="56"/>
</dbReference>
<dbReference type="IntAct" id="Q7Z794">
    <property type="interactions" value="29"/>
</dbReference>
<dbReference type="STRING" id="9606.ENSP00000342710"/>
<dbReference type="GlyGen" id="Q7Z794">
    <property type="glycosylation" value="1 site, 1 O-linked glycan (1 site)"/>
</dbReference>
<dbReference type="iPTMnet" id="Q7Z794"/>
<dbReference type="PhosphoSitePlus" id="Q7Z794"/>
<dbReference type="SwissPalm" id="Q7Z794"/>
<dbReference type="BioMuta" id="KRT77"/>
<dbReference type="DMDM" id="308153590"/>
<dbReference type="jPOST" id="Q7Z794"/>
<dbReference type="MassIVE" id="Q7Z794"/>
<dbReference type="PaxDb" id="9606-ENSP00000342710"/>
<dbReference type="PeptideAtlas" id="Q7Z794"/>
<dbReference type="PRIDE" id="Q7Z794"/>
<dbReference type="ProteomicsDB" id="69492"/>
<dbReference type="Antibodypedia" id="51312">
    <property type="antibodies" value="594 antibodies from 23 providers"/>
</dbReference>
<dbReference type="DNASU" id="374454"/>
<dbReference type="Ensembl" id="ENST00000341809.8">
    <property type="protein sequence ID" value="ENSP00000342710.3"/>
    <property type="gene ID" value="ENSG00000189182.10"/>
</dbReference>
<dbReference type="GeneID" id="374454"/>
<dbReference type="KEGG" id="hsa:374454"/>
<dbReference type="MANE-Select" id="ENST00000341809.8">
    <property type="protein sequence ID" value="ENSP00000342710.3"/>
    <property type="RefSeq nucleotide sequence ID" value="NM_175078.3"/>
    <property type="RefSeq protein sequence ID" value="NP_778253.2"/>
</dbReference>
<dbReference type="UCSC" id="uc001saw.4">
    <property type="organism name" value="human"/>
</dbReference>
<dbReference type="AGR" id="HGNC:20411"/>
<dbReference type="CTD" id="374454"/>
<dbReference type="DisGeNET" id="374454"/>
<dbReference type="GeneCards" id="KRT77"/>
<dbReference type="HGNC" id="HGNC:20411">
    <property type="gene designation" value="KRT77"/>
</dbReference>
<dbReference type="HPA" id="ENSG00000189182">
    <property type="expression patterns" value="Tissue enriched (skin)"/>
</dbReference>
<dbReference type="MIM" id="611158">
    <property type="type" value="gene"/>
</dbReference>
<dbReference type="neXtProt" id="NX_Q7Z794"/>
<dbReference type="OpenTargets" id="ENSG00000189182"/>
<dbReference type="VEuPathDB" id="HostDB:ENSG00000189182"/>
<dbReference type="eggNOG" id="ENOG502QQIF">
    <property type="taxonomic scope" value="Eukaryota"/>
</dbReference>
<dbReference type="GeneTree" id="ENSGT00940000162397"/>
<dbReference type="HOGENOM" id="CLU_012560_6_1_1"/>
<dbReference type="InParanoid" id="Q7Z794"/>
<dbReference type="OMA" id="VQTHISD"/>
<dbReference type="OrthoDB" id="9837555at2759"/>
<dbReference type="PAN-GO" id="Q7Z794">
    <property type="GO annotations" value="4 GO annotations based on evolutionary models"/>
</dbReference>
<dbReference type="PhylomeDB" id="Q7Z794"/>
<dbReference type="TreeFam" id="TF317854"/>
<dbReference type="PathwayCommons" id="Q7Z794"/>
<dbReference type="Reactome" id="R-HSA-6805567">
    <property type="pathway name" value="Keratinization"/>
</dbReference>
<dbReference type="Reactome" id="R-HSA-6809371">
    <property type="pathway name" value="Formation of the cornified envelope"/>
</dbReference>
<dbReference type="SignaLink" id="Q7Z794"/>
<dbReference type="BioGRID-ORCS" id="374454">
    <property type="hits" value="7 hits in 1133 CRISPR screens"/>
</dbReference>
<dbReference type="ChiTaRS" id="KRT77">
    <property type="organism name" value="human"/>
</dbReference>
<dbReference type="GenomeRNAi" id="374454"/>
<dbReference type="Pharos" id="Q7Z794">
    <property type="development level" value="Tbio"/>
</dbReference>
<dbReference type="PRO" id="PR:Q7Z794"/>
<dbReference type="Proteomes" id="UP000005640">
    <property type="component" value="Chromosome 12"/>
</dbReference>
<dbReference type="RNAct" id="Q7Z794">
    <property type="molecule type" value="protein"/>
</dbReference>
<dbReference type="Bgee" id="ENSG00000189182">
    <property type="expression patterns" value="Expressed in upper arm skin and 73 other cell types or tissues"/>
</dbReference>
<dbReference type="ExpressionAtlas" id="Q7Z794">
    <property type="expression patterns" value="baseline and differential"/>
</dbReference>
<dbReference type="GO" id="GO:0001533">
    <property type="term" value="C:cornified envelope"/>
    <property type="evidence" value="ECO:0007669"/>
    <property type="project" value="Ensembl"/>
</dbReference>
<dbReference type="GO" id="GO:0005856">
    <property type="term" value="C:cytoskeleton"/>
    <property type="evidence" value="ECO:0000314"/>
    <property type="project" value="UniProtKB"/>
</dbReference>
<dbReference type="GO" id="GO:0005829">
    <property type="term" value="C:cytosol"/>
    <property type="evidence" value="ECO:0000304"/>
    <property type="project" value="Reactome"/>
</dbReference>
<dbReference type="GO" id="GO:0070062">
    <property type="term" value="C:extracellular exosome"/>
    <property type="evidence" value="ECO:0007005"/>
    <property type="project" value="UniProtKB"/>
</dbReference>
<dbReference type="GO" id="GO:0045095">
    <property type="term" value="C:keratin filament"/>
    <property type="evidence" value="ECO:0000318"/>
    <property type="project" value="GO_Central"/>
</dbReference>
<dbReference type="GO" id="GO:0030280">
    <property type="term" value="F:structural constituent of skin epidermis"/>
    <property type="evidence" value="ECO:0000318"/>
    <property type="project" value="GO_Central"/>
</dbReference>
<dbReference type="GO" id="GO:0045109">
    <property type="term" value="P:intermediate filament organization"/>
    <property type="evidence" value="ECO:0000318"/>
    <property type="project" value="GO_Central"/>
</dbReference>
<dbReference type="GO" id="GO:0031424">
    <property type="term" value="P:keratinization"/>
    <property type="evidence" value="ECO:0000318"/>
    <property type="project" value="GO_Central"/>
</dbReference>
<dbReference type="FunFam" id="1.20.5.1160:FF:000001">
    <property type="entry name" value="Keratin type II"/>
    <property type="match status" value="1"/>
</dbReference>
<dbReference type="FunFam" id="1.20.5.170:FF:000065">
    <property type="entry name" value="Keratin, type II cytoskeletal 80"/>
    <property type="match status" value="1"/>
</dbReference>
<dbReference type="FunFam" id="1.20.5.500:FF:000001">
    <property type="entry name" value="Type II keratin 23"/>
    <property type="match status" value="1"/>
</dbReference>
<dbReference type="Gene3D" id="1.20.5.170">
    <property type="match status" value="1"/>
</dbReference>
<dbReference type="Gene3D" id="1.20.5.500">
    <property type="entry name" value="Single helix bin"/>
    <property type="match status" value="1"/>
</dbReference>
<dbReference type="Gene3D" id="1.20.5.1160">
    <property type="entry name" value="Vasodilator-stimulated phosphoprotein"/>
    <property type="match status" value="1"/>
</dbReference>
<dbReference type="InterPro" id="IPR018039">
    <property type="entry name" value="IF_conserved"/>
</dbReference>
<dbReference type="InterPro" id="IPR039008">
    <property type="entry name" value="IF_rod_dom"/>
</dbReference>
<dbReference type="InterPro" id="IPR032444">
    <property type="entry name" value="Keratin_2_head"/>
</dbReference>
<dbReference type="InterPro" id="IPR003054">
    <property type="entry name" value="Keratin_II"/>
</dbReference>
<dbReference type="PANTHER" id="PTHR45616">
    <property type="entry name" value="GATA-TYPE DOMAIN-CONTAINING PROTEIN"/>
    <property type="match status" value="1"/>
</dbReference>
<dbReference type="PANTHER" id="PTHR45616:SF24">
    <property type="entry name" value="KERATIN, TYPE II CYTOSKELETAL 1B"/>
    <property type="match status" value="1"/>
</dbReference>
<dbReference type="Pfam" id="PF00038">
    <property type="entry name" value="Filament"/>
    <property type="match status" value="1"/>
</dbReference>
<dbReference type="Pfam" id="PF16208">
    <property type="entry name" value="Keratin_2_head"/>
    <property type="match status" value="1"/>
</dbReference>
<dbReference type="PRINTS" id="PR01276">
    <property type="entry name" value="TYPE2KERATIN"/>
</dbReference>
<dbReference type="SMART" id="SM01391">
    <property type="entry name" value="Filament"/>
    <property type="match status" value="1"/>
</dbReference>
<dbReference type="SUPFAM" id="SSF64593">
    <property type="entry name" value="Intermediate filament protein, coiled coil region"/>
    <property type="match status" value="2"/>
</dbReference>
<dbReference type="PROSITE" id="PS00226">
    <property type="entry name" value="IF_ROD_1"/>
    <property type="match status" value="1"/>
</dbReference>
<dbReference type="PROSITE" id="PS51842">
    <property type="entry name" value="IF_ROD_2"/>
    <property type="match status" value="1"/>
</dbReference>
<comment type="interaction">
    <interactant intactId="EBI-3045529">
        <id>Q7Z794</id>
    </interactant>
    <interactant intactId="EBI-739566">
        <id>P19012</id>
        <label>KRT15</label>
    </interactant>
    <organismsDiffer>false</organismsDiffer>
    <experiments>3</experiments>
</comment>
<comment type="interaction">
    <interactant intactId="EBI-3045529">
        <id>Q7Z794</id>
    </interactant>
    <interactant intactId="EBI-742756">
        <id>P08727</id>
        <label>KRT19</label>
    </interactant>
    <organismsDiffer>false</organismsDiffer>
    <experiments>3</experiments>
</comment>
<comment type="interaction">
    <interactant intactId="EBI-3045529">
        <id>Q7Z794</id>
    </interactant>
    <interactant intactId="EBI-3044087">
        <id>Q7Z3Y8</id>
        <label>KRT27</label>
    </interactant>
    <organismsDiffer>false</organismsDiffer>
    <experiments>3</experiments>
</comment>
<comment type="interaction">
    <interactant intactId="EBI-3045529">
        <id>Q7Z794</id>
    </interactant>
    <interactant intactId="EBI-948001">
        <id>Q15323</id>
        <label>KRT31</label>
    </interactant>
    <organismsDiffer>false</organismsDiffer>
    <experiments>3</experiments>
</comment>
<comment type="interaction">
    <interactant intactId="EBI-3045529">
        <id>Q7Z794</id>
    </interactant>
    <interactant intactId="EBI-1058674">
        <id>Q92764</id>
        <label>KRT35</label>
    </interactant>
    <organismsDiffer>false</organismsDiffer>
    <experiments>3</experiments>
</comment>
<comment type="interaction">
    <interactant intactId="EBI-3045529">
        <id>Q7Z794</id>
    </interactant>
    <interactant intactId="EBI-11958506">
        <id>O76013-2</id>
        <label>KRT36</label>
    </interactant>
    <organismsDiffer>false</organismsDiffer>
    <experiments>3</experiments>
</comment>
<comment type="interaction">
    <interactant intactId="EBI-3045529">
        <id>Q7Z794</id>
    </interactant>
    <interactant intactId="EBI-724076">
        <id>Q99750</id>
        <label>MDFI</label>
    </interactant>
    <organismsDiffer>false</organismsDiffer>
    <experiments>3</experiments>
</comment>
<comment type="tissue specificity">
    <text evidence="4">Expressed exclusively in skin.</text>
</comment>
<comment type="PTM">
    <text evidence="1">Undergoes deimination of some arginine residues (citrullination).</text>
</comment>
<comment type="miscellaneous">
    <text>There are two types of cytoskeletal and microfibrillar keratin: I (acidic; 40-55 kDa) and II (neutral to basic; 56-70 kDa).</text>
</comment>
<comment type="similarity">
    <text evidence="2">Belongs to the intermediate filament family.</text>
</comment>
<comment type="sequence caution" evidence="5">
    <conflict type="erroneous gene model prediction">
        <sequence resource="EMBL-CDS" id="DAA00402"/>
    </conflict>
</comment>
<organism>
    <name type="scientific">Homo sapiens</name>
    <name type="common">Human</name>
    <dbReference type="NCBI Taxonomy" id="9606"/>
    <lineage>
        <taxon>Eukaryota</taxon>
        <taxon>Metazoa</taxon>
        <taxon>Chordata</taxon>
        <taxon>Craniata</taxon>
        <taxon>Vertebrata</taxon>
        <taxon>Euteleostomi</taxon>
        <taxon>Mammalia</taxon>
        <taxon>Eutheria</taxon>
        <taxon>Euarchontoglires</taxon>
        <taxon>Primates</taxon>
        <taxon>Haplorrhini</taxon>
        <taxon>Catarrhini</taxon>
        <taxon>Hominidae</taxon>
        <taxon>Homo</taxon>
    </lineage>
</organism>
<evidence type="ECO:0000250" key="1">
    <source>
        <dbReference type="UniProtKB" id="Q6IFZ6"/>
    </source>
</evidence>
<evidence type="ECO:0000255" key="2">
    <source>
        <dbReference type="PROSITE-ProRule" id="PRU01188"/>
    </source>
</evidence>
<evidence type="ECO:0000256" key="3">
    <source>
        <dbReference type="SAM" id="MobiDB-lite"/>
    </source>
</evidence>
<evidence type="ECO:0000269" key="4">
    <source>
    </source>
</evidence>
<evidence type="ECO:0000305" key="5"/>
<evidence type="ECO:0000312" key="6">
    <source>
        <dbReference type="EMBL" id="CAD91892.1"/>
    </source>
</evidence>
<evidence type="ECO:0000312" key="7">
    <source>
        <dbReference type="EMBL" id="DAA00402.1"/>
    </source>
</evidence>